<organism>
    <name type="scientific">Novosphingobium aromaticivorans (strain ATCC 700278 / DSM 12444 / CCUG 56034 / CIP 105152 / NBRC 16084 / F199)</name>
    <dbReference type="NCBI Taxonomy" id="279238"/>
    <lineage>
        <taxon>Bacteria</taxon>
        <taxon>Pseudomonadati</taxon>
        <taxon>Pseudomonadota</taxon>
        <taxon>Alphaproteobacteria</taxon>
        <taxon>Sphingomonadales</taxon>
        <taxon>Sphingomonadaceae</taxon>
        <taxon>Novosphingobium</taxon>
    </lineage>
</organism>
<comment type="function">
    <text evidence="1">Catalyzes the folate-dependent formation of 5-methyl-uridine at position 54 (M-5-U54) in all tRNAs.</text>
</comment>
<comment type="catalytic activity">
    <reaction evidence="1">
        <text>uridine(54) in tRNA + (6R)-5,10-methylene-5,6,7,8-tetrahydrofolate + NADH + H(+) = 5-methyluridine(54) in tRNA + (6S)-5,6,7,8-tetrahydrofolate + NAD(+)</text>
        <dbReference type="Rhea" id="RHEA:16873"/>
        <dbReference type="Rhea" id="RHEA-COMP:10167"/>
        <dbReference type="Rhea" id="RHEA-COMP:10193"/>
        <dbReference type="ChEBI" id="CHEBI:15378"/>
        <dbReference type="ChEBI" id="CHEBI:15636"/>
        <dbReference type="ChEBI" id="CHEBI:57453"/>
        <dbReference type="ChEBI" id="CHEBI:57540"/>
        <dbReference type="ChEBI" id="CHEBI:57945"/>
        <dbReference type="ChEBI" id="CHEBI:65315"/>
        <dbReference type="ChEBI" id="CHEBI:74447"/>
        <dbReference type="EC" id="2.1.1.74"/>
    </reaction>
</comment>
<comment type="catalytic activity">
    <reaction evidence="1">
        <text>uridine(54) in tRNA + (6R)-5,10-methylene-5,6,7,8-tetrahydrofolate + NADPH + H(+) = 5-methyluridine(54) in tRNA + (6S)-5,6,7,8-tetrahydrofolate + NADP(+)</text>
        <dbReference type="Rhea" id="RHEA:62372"/>
        <dbReference type="Rhea" id="RHEA-COMP:10167"/>
        <dbReference type="Rhea" id="RHEA-COMP:10193"/>
        <dbReference type="ChEBI" id="CHEBI:15378"/>
        <dbReference type="ChEBI" id="CHEBI:15636"/>
        <dbReference type="ChEBI" id="CHEBI:57453"/>
        <dbReference type="ChEBI" id="CHEBI:57783"/>
        <dbReference type="ChEBI" id="CHEBI:58349"/>
        <dbReference type="ChEBI" id="CHEBI:65315"/>
        <dbReference type="ChEBI" id="CHEBI:74447"/>
        <dbReference type="EC" id="2.1.1.74"/>
    </reaction>
</comment>
<comment type="cofactor">
    <cofactor evidence="1">
        <name>FAD</name>
        <dbReference type="ChEBI" id="CHEBI:57692"/>
    </cofactor>
</comment>
<comment type="subcellular location">
    <subcellularLocation>
        <location evidence="1">Cytoplasm</location>
    </subcellularLocation>
</comment>
<comment type="similarity">
    <text evidence="1">Belongs to the MnmG family. TrmFO subfamily.</text>
</comment>
<proteinExistence type="inferred from homology"/>
<protein>
    <recommendedName>
        <fullName evidence="1">Methylenetetrahydrofolate--tRNA-(uracil-5-)-methyltransferase TrmFO</fullName>
        <ecNumber evidence="1">2.1.1.74</ecNumber>
    </recommendedName>
    <alternativeName>
        <fullName evidence="1">Folate-dependent tRNA (uracil-5-)-methyltransferase</fullName>
    </alternativeName>
    <alternativeName>
        <fullName evidence="1">Folate-dependent tRNA(M-5-U54)-methyltransferase</fullName>
    </alternativeName>
</protein>
<gene>
    <name evidence="1" type="primary">trmFO</name>
    <name type="ordered locus">Saro_1915</name>
</gene>
<name>TRMFO_NOVAD</name>
<reference key="1">
    <citation type="submission" date="2006-01" db="EMBL/GenBank/DDBJ databases">
        <title>Complete sequence of Novosphingobium aromaticivorans DSM 12444.</title>
        <authorList>
            <consortium name="US DOE Joint Genome Institute"/>
            <person name="Copeland A."/>
            <person name="Lucas S."/>
            <person name="Lapidus A."/>
            <person name="Barry K."/>
            <person name="Detter J.C."/>
            <person name="Glavina T."/>
            <person name="Hammon N."/>
            <person name="Israni S."/>
            <person name="Pitluck S."/>
            <person name="Chain P."/>
            <person name="Malfatti S."/>
            <person name="Shin M."/>
            <person name="Vergez L."/>
            <person name="Schmutz J."/>
            <person name="Larimer F."/>
            <person name="Land M."/>
            <person name="Kyrpides N."/>
            <person name="Ivanova N."/>
            <person name="Fredrickson J."/>
            <person name="Balkwill D."/>
            <person name="Romine M.F."/>
            <person name="Richardson P."/>
        </authorList>
    </citation>
    <scope>NUCLEOTIDE SEQUENCE [LARGE SCALE GENOMIC DNA]</scope>
    <source>
        <strain>ATCC 700278 / DSM 12444 / CCUG 56034 / CIP 105152 / NBRC 16084 / F199</strain>
    </source>
</reference>
<sequence>MTHQVHIIGGGMAGTEAAWQLARRGIRVRLSEMRGGGDTTPAHNGDGLAELVCSNSFRSDDDEKNAVGLLHYEMRQCDSLLMAAAAKARVPAGSALAVDRDVFSAEVEAALRAQPTLEIVRERVDVLPSDGLTIVATGPLTAPSLANSIGSATGADSLAFFDAIAPIVYRDSIDMGVAWMASRWDKGAEASLAMGGDGRDYINCPMTRDQYLAFREELLAGEKTEFKEWEANTPYFDGCMPIEVMAARGEETLRFGPMKPVGLDNPHWATAEHPNGRWPYAVVQLRQDNKLGTLWNMVGFQTKLKHAEQVRVFRTIPGLENAEFARLGGLHRNTFLNSPTLLDRQLRLKSAPNVRFAGQITGCEGYVESGSVGMLAGLMVAAQIAGLDWSPPPRTTALGALLAHITGDAEAESFQPMNVNFGLFSPVDASVKKKVRKEAYTARAKADLSDWIATLA</sequence>
<keyword id="KW-0963">Cytoplasm</keyword>
<keyword id="KW-0274">FAD</keyword>
<keyword id="KW-0285">Flavoprotein</keyword>
<keyword id="KW-0489">Methyltransferase</keyword>
<keyword id="KW-0520">NAD</keyword>
<keyword id="KW-0521">NADP</keyword>
<keyword id="KW-1185">Reference proteome</keyword>
<keyword id="KW-0808">Transferase</keyword>
<keyword id="KW-0819">tRNA processing</keyword>
<dbReference type="EC" id="2.1.1.74" evidence="1"/>
<dbReference type="EMBL" id="CP000248">
    <property type="protein sequence ID" value="ABD26355.1"/>
    <property type="molecule type" value="Genomic_DNA"/>
</dbReference>
<dbReference type="RefSeq" id="WP_011445565.1">
    <property type="nucleotide sequence ID" value="NC_007794.1"/>
</dbReference>
<dbReference type="SMR" id="Q2G718"/>
<dbReference type="STRING" id="279238.Saro_1915"/>
<dbReference type="KEGG" id="nar:Saro_1915"/>
<dbReference type="eggNOG" id="COG1206">
    <property type="taxonomic scope" value="Bacteria"/>
</dbReference>
<dbReference type="HOGENOM" id="CLU_033057_1_0_5"/>
<dbReference type="Proteomes" id="UP000009134">
    <property type="component" value="Chromosome"/>
</dbReference>
<dbReference type="GO" id="GO:0005829">
    <property type="term" value="C:cytosol"/>
    <property type="evidence" value="ECO:0007669"/>
    <property type="project" value="TreeGrafter"/>
</dbReference>
<dbReference type="GO" id="GO:0050660">
    <property type="term" value="F:flavin adenine dinucleotide binding"/>
    <property type="evidence" value="ECO:0007669"/>
    <property type="project" value="UniProtKB-UniRule"/>
</dbReference>
<dbReference type="GO" id="GO:0047151">
    <property type="term" value="F:tRNA (uracil(54)-C5)-methyltransferase activity, 5,10-methylenetetrahydrofolate-dependent"/>
    <property type="evidence" value="ECO:0007669"/>
    <property type="project" value="UniProtKB-UniRule"/>
</dbReference>
<dbReference type="GO" id="GO:0030488">
    <property type="term" value="P:tRNA methylation"/>
    <property type="evidence" value="ECO:0007669"/>
    <property type="project" value="TreeGrafter"/>
</dbReference>
<dbReference type="GO" id="GO:0002098">
    <property type="term" value="P:tRNA wobble uridine modification"/>
    <property type="evidence" value="ECO:0007669"/>
    <property type="project" value="TreeGrafter"/>
</dbReference>
<dbReference type="Gene3D" id="3.50.50.60">
    <property type="entry name" value="FAD/NAD(P)-binding domain"/>
    <property type="match status" value="2"/>
</dbReference>
<dbReference type="HAMAP" id="MF_01037">
    <property type="entry name" value="TrmFO"/>
    <property type="match status" value="1"/>
</dbReference>
<dbReference type="InterPro" id="IPR036188">
    <property type="entry name" value="FAD/NAD-bd_sf"/>
</dbReference>
<dbReference type="InterPro" id="IPR002218">
    <property type="entry name" value="MnmG-rel"/>
</dbReference>
<dbReference type="InterPro" id="IPR020595">
    <property type="entry name" value="MnmG-rel_CS"/>
</dbReference>
<dbReference type="InterPro" id="IPR040131">
    <property type="entry name" value="MnmG_N"/>
</dbReference>
<dbReference type="InterPro" id="IPR004417">
    <property type="entry name" value="TrmFO"/>
</dbReference>
<dbReference type="NCBIfam" id="TIGR00137">
    <property type="entry name" value="gid_trmFO"/>
    <property type="match status" value="1"/>
</dbReference>
<dbReference type="NCBIfam" id="NF003739">
    <property type="entry name" value="PRK05335.1"/>
    <property type="match status" value="1"/>
</dbReference>
<dbReference type="PANTHER" id="PTHR11806">
    <property type="entry name" value="GLUCOSE INHIBITED DIVISION PROTEIN A"/>
    <property type="match status" value="1"/>
</dbReference>
<dbReference type="PANTHER" id="PTHR11806:SF2">
    <property type="entry name" value="METHYLENETETRAHYDROFOLATE--TRNA-(URACIL-5-)-METHYLTRANSFERASE TRMFO"/>
    <property type="match status" value="1"/>
</dbReference>
<dbReference type="Pfam" id="PF01134">
    <property type="entry name" value="GIDA"/>
    <property type="match status" value="1"/>
</dbReference>
<dbReference type="SUPFAM" id="SSF51905">
    <property type="entry name" value="FAD/NAD(P)-binding domain"/>
    <property type="match status" value="1"/>
</dbReference>
<dbReference type="PROSITE" id="PS01281">
    <property type="entry name" value="GIDA_2"/>
    <property type="match status" value="1"/>
</dbReference>
<evidence type="ECO:0000255" key="1">
    <source>
        <dbReference type="HAMAP-Rule" id="MF_01037"/>
    </source>
</evidence>
<feature type="chain" id="PRO_0000346369" description="Methylenetetrahydrofolate--tRNA-(uracil-5-)-methyltransferase TrmFO">
    <location>
        <begin position="1"/>
        <end position="456"/>
    </location>
</feature>
<feature type="binding site" evidence="1">
    <location>
        <begin position="9"/>
        <end position="14"/>
    </location>
    <ligand>
        <name>FAD</name>
        <dbReference type="ChEBI" id="CHEBI:57692"/>
    </ligand>
</feature>
<accession>Q2G718</accession>